<proteinExistence type="inferred from homology"/>
<sequence>MKFIVIKIGGSTLSDMHPSIINNIKHLRSNNIYPIIVHGGGPFINEALSNQQIEPHFVNGLRVTDKATMTITKHTLIADVNTALVAQFNQHQCSAIGLCGLDAQLFEITSFDQQYGYVGVPTALNKDALQYLCTKFVPIINSIGFNNHDGEFYNINADTLAYFIASSLKAPIYVLSNIAGVLINDVVIPQLPLVDIHQYIEHGDIYGGMIPKVLDAKNAIENGCPKVIIASGNKPNIIESIYNNDFVGTTILNS</sequence>
<dbReference type="EC" id="2.7.2.8" evidence="1"/>
<dbReference type="EMBL" id="AP009324">
    <property type="protein sequence ID" value="BAF77064.1"/>
    <property type="molecule type" value="Genomic_DNA"/>
</dbReference>
<dbReference type="RefSeq" id="WP_000668894.1">
    <property type="nucleotide sequence ID" value="NC_009782.1"/>
</dbReference>
<dbReference type="SMR" id="A7WXH2"/>
<dbReference type="KEGG" id="saw:SAHV_0181"/>
<dbReference type="HOGENOM" id="CLU_053680_1_0_9"/>
<dbReference type="UniPathway" id="UPA00068">
    <property type="reaction ID" value="UER00107"/>
</dbReference>
<dbReference type="GO" id="GO:0005737">
    <property type="term" value="C:cytoplasm"/>
    <property type="evidence" value="ECO:0007669"/>
    <property type="project" value="UniProtKB-SubCell"/>
</dbReference>
<dbReference type="GO" id="GO:0003991">
    <property type="term" value="F:acetylglutamate kinase activity"/>
    <property type="evidence" value="ECO:0007669"/>
    <property type="project" value="UniProtKB-UniRule"/>
</dbReference>
<dbReference type="GO" id="GO:0005524">
    <property type="term" value="F:ATP binding"/>
    <property type="evidence" value="ECO:0007669"/>
    <property type="project" value="UniProtKB-UniRule"/>
</dbReference>
<dbReference type="GO" id="GO:0042450">
    <property type="term" value="P:arginine biosynthetic process via ornithine"/>
    <property type="evidence" value="ECO:0007669"/>
    <property type="project" value="UniProtKB-UniRule"/>
</dbReference>
<dbReference type="GO" id="GO:0006526">
    <property type="term" value="P:L-arginine biosynthetic process"/>
    <property type="evidence" value="ECO:0007669"/>
    <property type="project" value="UniProtKB-UniPathway"/>
</dbReference>
<dbReference type="CDD" id="cd04238">
    <property type="entry name" value="AAK_NAGK-like"/>
    <property type="match status" value="1"/>
</dbReference>
<dbReference type="FunFam" id="3.40.1160.10:FF:000037">
    <property type="entry name" value="Acetylglutamate kinase"/>
    <property type="match status" value="1"/>
</dbReference>
<dbReference type="Gene3D" id="3.40.1160.10">
    <property type="entry name" value="Acetylglutamate kinase-like"/>
    <property type="match status" value="1"/>
</dbReference>
<dbReference type="HAMAP" id="MF_00082">
    <property type="entry name" value="ArgB"/>
    <property type="match status" value="1"/>
</dbReference>
<dbReference type="InterPro" id="IPR036393">
    <property type="entry name" value="AceGlu_kinase-like_sf"/>
</dbReference>
<dbReference type="InterPro" id="IPR004662">
    <property type="entry name" value="AcgluKinase_fam"/>
</dbReference>
<dbReference type="InterPro" id="IPR037528">
    <property type="entry name" value="ArgB"/>
</dbReference>
<dbReference type="InterPro" id="IPR001048">
    <property type="entry name" value="Asp/Glu/Uridylate_kinase"/>
</dbReference>
<dbReference type="NCBIfam" id="TIGR00761">
    <property type="entry name" value="argB"/>
    <property type="match status" value="1"/>
</dbReference>
<dbReference type="PANTHER" id="PTHR23342">
    <property type="entry name" value="N-ACETYLGLUTAMATE SYNTHASE"/>
    <property type="match status" value="1"/>
</dbReference>
<dbReference type="PANTHER" id="PTHR23342:SF0">
    <property type="entry name" value="N-ACETYLGLUTAMATE SYNTHASE, MITOCHONDRIAL"/>
    <property type="match status" value="1"/>
</dbReference>
<dbReference type="Pfam" id="PF00696">
    <property type="entry name" value="AA_kinase"/>
    <property type="match status" value="1"/>
</dbReference>
<dbReference type="PIRSF" id="PIRSF000728">
    <property type="entry name" value="NAGK"/>
    <property type="match status" value="1"/>
</dbReference>
<dbReference type="SUPFAM" id="SSF53633">
    <property type="entry name" value="Carbamate kinase-like"/>
    <property type="match status" value="1"/>
</dbReference>
<evidence type="ECO:0000255" key="1">
    <source>
        <dbReference type="HAMAP-Rule" id="MF_00082"/>
    </source>
</evidence>
<name>ARGB_STAA1</name>
<reference key="1">
    <citation type="journal article" date="2008" name="Antimicrob. Agents Chemother.">
        <title>Mutated response regulator graR is responsible for phenotypic conversion of Staphylococcus aureus from heterogeneous vancomycin-intermediate resistance to vancomycin-intermediate resistance.</title>
        <authorList>
            <person name="Neoh H.-M."/>
            <person name="Cui L."/>
            <person name="Yuzawa H."/>
            <person name="Takeuchi F."/>
            <person name="Matsuo M."/>
            <person name="Hiramatsu K."/>
        </authorList>
    </citation>
    <scope>NUCLEOTIDE SEQUENCE [LARGE SCALE GENOMIC DNA]</scope>
    <source>
        <strain>Mu3 / ATCC 700698</strain>
    </source>
</reference>
<protein>
    <recommendedName>
        <fullName evidence="1">Acetylglutamate kinase</fullName>
        <ecNumber evidence="1">2.7.2.8</ecNumber>
    </recommendedName>
    <alternativeName>
        <fullName evidence="1">N-acetyl-L-glutamate 5-phosphotransferase</fullName>
    </alternativeName>
    <alternativeName>
        <fullName evidence="1">NAG kinase</fullName>
        <shortName evidence="1">NAGK</shortName>
    </alternativeName>
</protein>
<keyword id="KW-0028">Amino-acid biosynthesis</keyword>
<keyword id="KW-0055">Arginine biosynthesis</keyword>
<keyword id="KW-0067">ATP-binding</keyword>
<keyword id="KW-0963">Cytoplasm</keyword>
<keyword id="KW-0418">Kinase</keyword>
<keyword id="KW-0547">Nucleotide-binding</keyword>
<keyword id="KW-0808">Transferase</keyword>
<gene>
    <name evidence="1" type="primary">argB</name>
    <name type="ordered locus">SAHV_0181</name>
</gene>
<organism>
    <name type="scientific">Staphylococcus aureus (strain Mu3 / ATCC 700698)</name>
    <dbReference type="NCBI Taxonomy" id="418127"/>
    <lineage>
        <taxon>Bacteria</taxon>
        <taxon>Bacillati</taxon>
        <taxon>Bacillota</taxon>
        <taxon>Bacilli</taxon>
        <taxon>Bacillales</taxon>
        <taxon>Staphylococcaceae</taxon>
        <taxon>Staphylococcus</taxon>
    </lineage>
</organism>
<comment type="function">
    <text evidence="1">Catalyzes the ATP-dependent phosphorylation of N-acetyl-L-glutamate.</text>
</comment>
<comment type="catalytic activity">
    <reaction evidence="1">
        <text>N-acetyl-L-glutamate + ATP = N-acetyl-L-glutamyl 5-phosphate + ADP</text>
        <dbReference type="Rhea" id="RHEA:14629"/>
        <dbReference type="ChEBI" id="CHEBI:30616"/>
        <dbReference type="ChEBI" id="CHEBI:44337"/>
        <dbReference type="ChEBI" id="CHEBI:57936"/>
        <dbReference type="ChEBI" id="CHEBI:456216"/>
        <dbReference type="EC" id="2.7.2.8"/>
    </reaction>
</comment>
<comment type="pathway">
    <text evidence="1">Amino-acid biosynthesis; L-arginine biosynthesis; N(2)-acetyl-L-ornithine from L-glutamate: step 2/4.</text>
</comment>
<comment type="subcellular location">
    <subcellularLocation>
        <location evidence="1">Cytoplasm</location>
    </subcellularLocation>
</comment>
<comment type="similarity">
    <text evidence="1">Belongs to the acetylglutamate kinase family. ArgB subfamily.</text>
</comment>
<feature type="chain" id="PRO_1000010547" description="Acetylglutamate kinase">
    <location>
        <begin position="1"/>
        <end position="254"/>
    </location>
</feature>
<feature type="binding site" evidence="1">
    <location>
        <begin position="40"/>
        <end position="41"/>
    </location>
    <ligand>
        <name>substrate</name>
    </ligand>
</feature>
<feature type="binding site" evidence="1">
    <location>
        <position position="62"/>
    </location>
    <ligand>
        <name>substrate</name>
    </ligand>
</feature>
<feature type="binding site" evidence="1">
    <location>
        <position position="154"/>
    </location>
    <ligand>
        <name>substrate</name>
    </ligand>
</feature>
<feature type="site" description="Transition state stabilizer" evidence="1">
    <location>
        <position position="7"/>
    </location>
</feature>
<feature type="site" description="Transition state stabilizer" evidence="1">
    <location>
        <position position="212"/>
    </location>
</feature>
<accession>A7WXH2</accession>